<keyword id="KW-0963">Cytoplasm</keyword>
<keyword id="KW-0342">GTP-binding</keyword>
<keyword id="KW-0460">Magnesium</keyword>
<keyword id="KW-0479">Metal-binding</keyword>
<keyword id="KW-0501">Molybdenum cofactor biosynthesis</keyword>
<keyword id="KW-0547">Nucleotide-binding</keyword>
<keyword id="KW-0808">Transferase</keyword>
<comment type="function">
    <text evidence="1">Transfers a GMP moiety from GTP to Mo-molybdopterin (Mo-MPT) cofactor (Moco or molybdenum cofactor) to form Mo-molybdopterin guanine dinucleotide (Mo-MGD) cofactor.</text>
</comment>
<comment type="catalytic activity">
    <reaction evidence="1">
        <text>Mo-molybdopterin + GTP + H(+) = Mo-molybdopterin guanine dinucleotide + diphosphate</text>
        <dbReference type="Rhea" id="RHEA:34243"/>
        <dbReference type="ChEBI" id="CHEBI:15378"/>
        <dbReference type="ChEBI" id="CHEBI:33019"/>
        <dbReference type="ChEBI" id="CHEBI:37565"/>
        <dbReference type="ChEBI" id="CHEBI:71302"/>
        <dbReference type="ChEBI" id="CHEBI:71310"/>
        <dbReference type="EC" id="2.7.7.77"/>
    </reaction>
</comment>
<comment type="cofactor">
    <cofactor evidence="1">
        <name>Mg(2+)</name>
        <dbReference type="ChEBI" id="CHEBI:18420"/>
    </cofactor>
</comment>
<comment type="subunit">
    <text evidence="1">Monomer.</text>
</comment>
<comment type="subcellular location">
    <subcellularLocation>
        <location evidence="1">Cytoplasm</location>
    </subcellularLocation>
</comment>
<comment type="domain">
    <text evidence="1">The N-terminal domain determines nucleotide recognition and specific binding, while the C-terminal domain determines the specific binding to the target protein.</text>
</comment>
<comment type="similarity">
    <text evidence="1">Belongs to the MobA family.</text>
</comment>
<organism>
    <name type="scientific">Acidovorax sp. (strain JS42)</name>
    <dbReference type="NCBI Taxonomy" id="232721"/>
    <lineage>
        <taxon>Bacteria</taxon>
        <taxon>Pseudomonadati</taxon>
        <taxon>Pseudomonadota</taxon>
        <taxon>Betaproteobacteria</taxon>
        <taxon>Burkholderiales</taxon>
        <taxon>Comamonadaceae</taxon>
        <taxon>Acidovorax</taxon>
    </lineage>
</organism>
<name>MOBA_ACISJ</name>
<feature type="chain" id="PRO_1000019095" description="Molybdenum cofactor guanylyltransferase">
    <location>
        <begin position="1"/>
        <end position="211"/>
    </location>
</feature>
<feature type="binding site" evidence="1">
    <location>
        <begin position="12"/>
        <end position="14"/>
    </location>
    <ligand>
        <name>GTP</name>
        <dbReference type="ChEBI" id="CHEBI:37565"/>
    </ligand>
</feature>
<feature type="binding site" evidence="1">
    <location>
        <position position="25"/>
    </location>
    <ligand>
        <name>GTP</name>
        <dbReference type="ChEBI" id="CHEBI:37565"/>
    </ligand>
</feature>
<feature type="binding site" evidence="1">
    <location>
        <position position="53"/>
    </location>
    <ligand>
        <name>GTP</name>
        <dbReference type="ChEBI" id="CHEBI:37565"/>
    </ligand>
</feature>
<feature type="binding site" evidence="1">
    <location>
        <position position="71"/>
    </location>
    <ligand>
        <name>GTP</name>
        <dbReference type="ChEBI" id="CHEBI:37565"/>
    </ligand>
</feature>
<feature type="binding site" evidence="1">
    <location>
        <position position="101"/>
    </location>
    <ligand>
        <name>GTP</name>
        <dbReference type="ChEBI" id="CHEBI:37565"/>
    </ligand>
</feature>
<feature type="binding site" evidence="1">
    <location>
        <position position="101"/>
    </location>
    <ligand>
        <name>Mg(2+)</name>
        <dbReference type="ChEBI" id="CHEBI:18420"/>
    </ligand>
</feature>
<reference key="1">
    <citation type="submission" date="2006-12" db="EMBL/GenBank/DDBJ databases">
        <title>Complete sequence of chromosome 1 of Acidovorax sp. JS42.</title>
        <authorList>
            <person name="Copeland A."/>
            <person name="Lucas S."/>
            <person name="Lapidus A."/>
            <person name="Barry K."/>
            <person name="Detter J.C."/>
            <person name="Glavina del Rio T."/>
            <person name="Dalin E."/>
            <person name="Tice H."/>
            <person name="Pitluck S."/>
            <person name="Chertkov O."/>
            <person name="Brettin T."/>
            <person name="Bruce D."/>
            <person name="Han C."/>
            <person name="Tapia R."/>
            <person name="Gilna P."/>
            <person name="Schmutz J."/>
            <person name="Larimer F."/>
            <person name="Land M."/>
            <person name="Hauser L."/>
            <person name="Kyrpides N."/>
            <person name="Kim E."/>
            <person name="Stahl D."/>
            <person name="Richardson P."/>
        </authorList>
    </citation>
    <scope>NUCLEOTIDE SEQUENCE [LARGE SCALE GENOMIC DNA]</scope>
    <source>
        <strain>JS42</strain>
    </source>
</reference>
<dbReference type="EC" id="2.7.7.77" evidence="1"/>
<dbReference type="EMBL" id="CP000539">
    <property type="protein sequence ID" value="ABM41936.1"/>
    <property type="molecule type" value="Genomic_DNA"/>
</dbReference>
<dbReference type="SMR" id="A1W6R1"/>
<dbReference type="STRING" id="232721.Ajs_1748"/>
<dbReference type="KEGG" id="ajs:Ajs_1748"/>
<dbReference type="eggNOG" id="COG0746">
    <property type="taxonomic scope" value="Bacteria"/>
</dbReference>
<dbReference type="HOGENOM" id="CLU_055597_5_1_4"/>
<dbReference type="Proteomes" id="UP000000645">
    <property type="component" value="Chromosome"/>
</dbReference>
<dbReference type="GO" id="GO:0005737">
    <property type="term" value="C:cytoplasm"/>
    <property type="evidence" value="ECO:0007669"/>
    <property type="project" value="UniProtKB-SubCell"/>
</dbReference>
<dbReference type="GO" id="GO:0005525">
    <property type="term" value="F:GTP binding"/>
    <property type="evidence" value="ECO:0007669"/>
    <property type="project" value="UniProtKB-UniRule"/>
</dbReference>
<dbReference type="GO" id="GO:0046872">
    <property type="term" value="F:metal ion binding"/>
    <property type="evidence" value="ECO:0007669"/>
    <property type="project" value="UniProtKB-KW"/>
</dbReference>
<dbReference type="GO" id="GO:0061603">
    <property type="term" value="F:molybdenum cofactor guanylyltransferase activity"/>
    <property type="evidence" value="ECO:0007669"/>
    <property type="project" value="UniProtKB-EC"/>
</dbReference>
<dbReference type="GO" id="GO:1902758">
    <property type="term" value="P:bis(molybdopterin guanine dinucleotide)molybdenum biosynthetic process"/>
    <property type="evidence" value="ECO:0007669"/>
    <property type="project" value="TreeGrafter"/>
</dbReference>
<dbReference type="CDD" id="cd02503">
    <property type="entry name" value="MobA"/>
    <property type="match status" value="1"/>
</dbReference>
<dbReference type="Gene3D" id="3.90.550.10">
    <property type="entry name" value="Spore Coat Polysaccharide Biosynthesis Protein SpsA, Chain A"/>
    <property type="match status" value="1"/>
</dbReference>
<dbReference type="HAMAP" id="MF_00316">
    <property type="entry name" value="MobA"/>
    <property type="match status" value="1"/>
</dbReference>
<dbReference type="InterPro" id="IPR025877">
    <property type="entry name" value="MobA-like_NTP_Trfase"/>
</dbReference>
<dbReference type="InterPro" id="IPR013482">
    <property type="entry name" value="Molybde_CF_guanTrfase"/>
</dbReference>
<dbReference type="InterPro" id="IPR029044">
    <property type="entry name" value="Nucleotide-diphossugar_trans"/>
</dbReference>
<dbReference type="NCBIfam" id="TIGR02665">
    <property type="entry name" value="molyb_mobA"/>
    <property type="match status" value="1"/>
</dbReference>
<dbReference type="PANTHER" id="PTHR19136">
    <property type="entry name" value="MOLYBDENUM COFACTOR GUANYLYLTRANSFERASE"/>
    <property type="match status" value="1"/>
</dbReference>
<dbReference type="PANTHER" id="PTHR19136:SF81">
    <property type="entry name" value="MOLYBDENUM COFACTOR GUANYLYLTRANSFERASE"/>
    <property type="match status" value="1"/>
</dbReference>
<dbReference type="Pfam" id="PF12804">
    <property type="entry name" value="NTP_transf_3"/>
    <property type="match status" value="1"/>
</dbReference>
<dbReference type="SUPFAM" id="SSF53448">
    <property type="entry name" value="Nucleotide-diphospho-sugar transferases"/>
    <property type="match status" value="1"/>
</dbReference>
<evidence type="ECO:0000255" key="1">
    <source>
        <dbReference type="HAMAP-Rule" id="MF_00316"/>
    </source>
</evidence>
<sequence>MIDTHDITGLILAGGRGSRMGGVDKGLQNFRGLPLALHTLMRLQPQVGDVMINANRNLAAYESFGVPVWPDGLADYAGPLAGFLTGLERCETPWLLTVPCDTPLFPPDLAARLAQAAMREGADIAMAAAPEADERDGTVRVRTQPVFCLLRVTLLESLVRFTQGGGRKIDRWTEQHACAVVPFDQPGDDPHAFYNANTLAELHALEGLGLR</sequence>
<gene>
    <name evidence="1" type="primary">mobA</name>
    <name type="ordered locus">Ajs_1748</name>
</gene>
<protein>
    <recommendedName>
        <fullName evidence="1">Molybdenum cofactor guanylyltransferase</fullName>
        <shortName evidence="1">MoCo guanylyltransferase</shortName>
        <ecNumber evidence="1">2.7.7.77</ecNumber>
    </recommendedName>
    <alternativeName>
        <fullName evidence="1">GTP:molybdopterin guanylyltransferase</fullName>
    </alternativeName>
    <alternativeName>
        <fullName evidence="1">Mo-MPT guanylyltransferase</fullName>
    </alternativeName>
    <alternativeName>
        <fullName evidence="1">Molybdopterin guanylyltransferase</fullName>
    </alternativeName>
    <alternativeName>
        <fullName evidence="1">Molybdopterin-guanine dinucleotide synthase</fullName>
        <shortName evidence="1">MGD synthase</shortName>
    </alternativeName>
</protein>
<proteinExistence type="inferred from homology"/>
<accession>A1W6R1</accession>